<gene>
    <name evidence="1" type="primary">kdsA</name>
    <name type="ordered locus">EcolC_2411</name>
</gene>
<keyword id="KW-0963">Cytoplasm</keyword>
<keyword id="KW-0448">Lipopolysaccharide biosynthesis</keyword>
<keyword id="KW-0808">Transferase</keyword>
<sequence length="284" mass="30833">MKQKVVSIGDINVANDLPFVLFGGMNVLESRDLAMRICEHYVTVTQKLGIPYVFKASFDKANRSSIHSYRGPGLEEGMKIFQELKQTFGVKIITDVHEPSQAQPVADVVDVIQLPAFLARQTDLVEAMAKTGAVINVKKPQFVSPGQMGNIVDKFKEGGNEKVILCDRGANFGYDNLVVDMLGFSIMKKVSGNSPVIFDVTHALQCRDPFGAASGGRRAQVAELARAGMAVGLAGLFIEAHPDPEHAKCDGPSALPLAKLEPFLKQMKAIDDLVKGFEELDTSK</sequence>
<comment type="catalytic activity">
    <reaction evidence="1">
        <text>D-arabinose 5-phosphate + phosphoenolpyruvate + H2O = 3-deoxy-alpha-D-manno-2-octulosonate-8-phosphate + phosphate</text>
        <dbReference type="Rhea" id="RHEA:14053"/>
        <dbReference type="ChEBI" id="CHEBI:15377"/>
        <dbReference type="ChEBI" id="CHEBI:43474"/>
        <dbReference type="ChEBI" id="CHEBI:57693"/>
        <dbReference type="ChEBI" id="CHEBI:58702"/>
        <dbReference type="ChEBI" id="CHEBI:85985"/>
        <dbReference type="EC" id="2.5.1.55"/>
    </reaction>
</comment>
<comment type="pathway">
    <text evidence="1">Carbohydrate biosynthesis; 3-deoxy-D-manno-octulosonate biosynthesis; 3-deoxy-D-manno-octulosonate from D-ribulose 5-phosphate: step 2/3.</text>
</comment>
<comment type="pathway">
    <text evidence="1">Bacterial outer membrane biogenesis; lipopolysaccharide biosynthesis.</text>
</comment>
<comment type="subcellular location">
    <subcellularLocation>
        <location evidence="1">Cytoplasm</location>
    </subcellularLocation>
</comment>
<comment type="similarity">
    <text evidence="1">Belongs to the KdsA family.</text>
</comment>
<proteinExistence type="inferred from homology"/>
<name>KDSA_ECOLC</name>
<protein>
    <recommendedName>
        <fullName evidence="1">2-dehydro-3-deoxyphosphooctonate aldolase</fullName>
        <ecNumber evidence="1">2.5.1.55</ecNumber>
    </recommendedName>
    <alternativeName>
        <fullName evidence="1">3-deoxy-D-manno-octulosonic acid 8-phosphate synthase</fullName>
    </alternativeName>
    <alternativeName>
        <fullName evidence="1">KDO-8-phosphate synthase</fullName>
        <shortName evidence="1">KDO 8-P synthase</shortName>
        <shortName evidence="1">KDOPS</shortName>
    </alternativeName>
    <alternativeName>
        <fullName evidence="1">Phospho-2-dehydro-3-deoxyoctonate aldolase</fullName>
    </alternativeName>
</protein>
<feature type="chain" id="PRO_1000074982" description="2-dehydro-3-deoxyphosphooctonate aldolase">
    <location>
        <begin position="1"/>
        <end position="284"/>
    </location>
</feature>
<dbReference type="EC" id="2.5.1.55" evidence="1"/>
<dbReference type="EMBL" id="CP000946">
    <property type="protein sequence ID" value="ACA78045.1"/>
    <property type="molecule type" value="Genomic_DNA"/>
</dbReference>
<dbReference type="RefSeq" id="WP_000811065.1">
    <property type="nucleotide sequence ID" value="NZ_MTFT01000016.1"/>
</dbReference>
<dbReference type="SMR" id="B1ITN8"/>
<dbReference type="GeneID" id="75203328"/>
<dbReference type="KEGG" id="ecl:EcolC_2411"/>
<dbReference type="HOGENOM" id="CLU_036666_0_0_6"/>
<dbReference type="UniPathway" id="UPA00030"/>
<dbReference type="UniPathway" id="UPA00357">
    <property type="reaction ID" value="UER00474"/>
</dbReference>
<dbReference type="GO" id="GO:0005737">
    <property type="term" value="C:cytoplasm"/>
    <property type="evidence" value="ECO:0007669"/>
    <property type="project" value="UniProtKB-SubCell"/>
</dbReference>
<dbReference type="GO" id="GO:0008676">
    <property type="term" value="F:3-deoxy-8-phosphooctulonate synthase activity"/>
    <property type="evidence" value="ECO:0007669"/>
    <property type="project" value="UniProtKB-UniRule"/>
</dbReference>
<dbReference type="GO" id="GO:0019294">
    <property type="term" value="P:keto-3-deoxy-D-manno-octulosonic acid biosynthetic process"/>
    <property type="evidence" value="ECO:0007669"/>
    <property type="project" value="UniProtKB-UniRule"/>
</dbReference>
<dbReference type="FunFam" id="3.20.20.70:FF:000058">
    <property type="entry name" value="2-dehydro-3-deoxyphosphooctonate aldolase"/>
    <property type="match status" value="1"/>
</dbReference>
<dbReference type="Gene3D" id="3.20.20.70">
    <property type="entry name" value="Aldolase class I"/>
    <property type="match status" value="1"/>
</dbReference>
<dbReference type="HAMAP" id="MF_00056">
    <property type="entry name" value="KDO8P_synth"/>
    <property type="match status" value="1"/>
</dbReference>
<dbReference type="InterPro" id="IPR013785">
    <property type="entry name" value="Aldolase_TIM"/>
</dbReference>
<dbReference type="InterPro" id="IPR006218">
    <property type="entry name" value="DAHP1/KDSA"/>
</dbReference>
<dbReference type="InterPro" id="IPR006269">
    <property type="entry name" value="KDO8P_synthase"/>
</dbReference>
<dbReference type="NCBIfam" id="TIGR01362">
    <property type="entry name" value="KDO8P_synth"/>
    <property type="match status" value="1"/>
</dbReference>
<dbReference type="NCBIfam" id="NF003543">
    <property type="entry name" value="PRK05198.1"/>
    <property type="match status" value="1"/>
</dbReference>
<dbReference type="NCBIfam" id="NF009109">
    <property type="entry name" value="PRK12457.1"/>
    <property type="match status" value="1"/>
</dbReference>
<dbReference type="PANTHER" id="PTHR21057">
    <property type="entry name" value="PHOSPHO-2-DEHYDRO-3-DEOXYHEPTONATE ALDOLASE"/>
    <property type="match status" value="1"/>
</dbReference>
<dbReference type="Pfam" id="PF00793">
    <property type="entry name" value="DAHP_synth_1"/>
    <property type="match status" value="1"/>
</dbReference>
<dbReference type="SUPFAM" id="SSF51569">
    <property type="entry name" value="Aldolase"/>
    <property type="match status" value="1"/>
</dbReference>
<reference key="1">
    <citation type="submission" date="2008-02" db="EMBL/GenBank/DDBJ databases">
        <title>Complete sequence of Escherichia coli C str. ATCC 8739.</title>
        <authorList>
            <person name="Copeland A."/>
            <person name="Lucas S."/>
            <person name="Lapidus A."/>
            <person name="Glavina del Rio T."/>
            <person name="Dalin E."/>
            <person name="Tice H."/>
            <person name="Bruce D."/>
            <person name="Goodwin L."/>
            <person name="Pitluck S."/>
            <person name="Kiss H."/>
            <person name="Brettin T."/>
            <person name="Detter J.C."/>
            <person name="Han C."/>
            <person name="Kuske C.R."/>
            <person name="Schmutz J."/>
            <person name="Larimer F."/>
            <person name="Land M."/>
            <person name="Hauser L."/>
            <person name="Kyrpides N."/>
            <person name="Mikhailova N."/>
            <person name="Ingram L."/>
            <person name="Richardson P."/>
        </authorList>
    </citation>
    <scope>NUCLEOTIDE SEQUENCE [LARGE SCALE GENOMIC DNA]</scope>
    <source>
        <strain>ATCC 8739 / DSM 1576 / NBRC 3972 / NCIMB 8545 / WDCM 00012 / Crooks</strain>
    </source>
</reference>
<evidence type="ECO:0000255" key="1">
    <source>
        <dbReference type="HAMAP-Rule" id="MF_00056"/>
    </source>
</evidence>
<accession>B1ITN8</accession>
<organism>
    <name type="scientific">Escherichia coli (strain ATCC 8739 / DSM 1576 / NBRC 3972 / NCIMB 8545 / WDCM 00012 / Crooks)</name>
    <dbReference type="NCBI Taxonomy" id="481805"/>
    <lineage>
        <taxon>Bacteria</taxon>
        <taxon>Pseudomonadati</taxon>
        <taxon>Pseudomonadota</taxon>
        <taxon>Gammaproteobacteria</taxon>
        <taxon>Enterobacterales</taxon>
        <taxon>Enterobacteriaceae</taxon>
        <taxon>Escherichia</taxon>
    </lineage>
</organism>